<protein>
    <recommendedName>
        <fullName evidence="1">Bifunctional protein PyrR</fullName>
    </recommendedName>
    <domain>
        <recommendedName>
            <fullName evidence="1">Pyrimidine operon regulatory protein</fullName>
        </recommendedName>
    </domain>
    <domain>
        <recommendedName>
            <fullName evidence="1">Uracil phosphoribosyltransferase</fullName>
            <shortName evidence="1">UPRTase</shortName>
            <ecNumber evidence="1">2.4.2.9</ecNumber>
        </recommendedName>
    </domain>
</protein>
<organism>
    <name type="scientific">Leuconostoc citreum (strain KM20)</name>
    <dbReference type="NCBI Taxonomy" id="349519"/>
    <lineage>
        <taxon>Bacteria</taxon>
        <taxon>Bacillati</taxon>
        <taxon>Bacillota</taxon>
        <taxon>Bacilli</taxon>
        <taxon>Lactobacillales</taxon>
        <taxon>Lactobacillaceae</taxon>
        <taxon>Leuconostoc</taxon>
    </lineage>
</organism>
<sequence>MTNKEVLDNASLQRALTRITYEIIERNKGGQDLVLVGIKTRGEFLAHRIANRLEQLEGVKIPVMAIDITNFRDDVLNHDDSLGLNDEEKTNIADKNIVLIDDVLFTGRTIRAALDALIHIGRPNTIALAVLVDRGHRELPIRADFVGKNIPTAQNEKIKVLVQEIDGRDAVEIVH</sequence>
<keyword id="KW-0328">Glycosyltransferase</keyword>
<keyword id="KW-1185">Reference proteome</keyword>
<keyword id="KW-0694">RNA-binding</keyword>
<keyword id="KW-0804">Transcription</keyword>
<keyword id="KW-0805">Transcription regulation</keyword>
<keyword id="KW-0806">Transcription termination</keyword>
<keyword id="KW-0808">Transferase</keyword>
<accession>B1MZJ0</accession>
<feature type="chain" id="PRO_1000139201" description="Bifunctional protein PyrR">
    <location>
        <begin position="1"/>
        <end position="175"/>
    </location>
</feature>
<feature type="short sequence motif" description="PRPP-binding" evidence="1">
    <location>
        <begin position="97"/>
        <end position="109"/>
    </location>
</feature>
<gene>
    <name evidence="1" type="primary">pyrR</name>
    <name type="ordered locus">LCK_01115</name>
</gene>
<proteinExistence type="inferred from homology"/>
<name>PYRR_LEUCK</name>
<reference key="1">
    <citation type="journal article" date="2008" name="J. Bacteriol.">
        <title>Complete genome sequence of Leuconostoc citreum KM20.</title>
        <authorList>
            <person name="Kim J.F."/>
            <person name="Jeong H."/>
            <person name="Lee J.-S."/>
            <person name="Choi S.-H."/>
            <person name="Ha M."/>
            <person name="Hur C.-G."/>
            <person name="Kim J.-S."/>
            <person name="Lee S."/>
            <person name="Park H.-S."/>
            <person name="Park Y.-H."/>
            <person name="Oh T.K."/>
        </authorList>
    </citation>
    <scope>NUCLEOTIDE SEQUENCE [LARGE SCALE GENOMIC DNA]</scope>
    <source>
        <strain>KM20</strain>
    </source>
</reference>
<comment type="function">
    <text evidence="1">Regulates transcriptional attenuation of the pyrimidine nucleotide (pyr) operon by binding in a uridine-dependent manner to specific sites on pyr mRNA. This disrupts an antiterminator hairpin in the RNA and favors formation of a downstream transcription terminator, leading to a reduced expression of downstream genes.</text>
</comment>
<comment type="function">
    <text evidence="1">Also displays a weak uracil phosphoribosyltransferase activity which is not physiologically significant.</text>
</comment>
<comment type="catalytic activity">
    <reaction evidence="1">
        <text>UMP + diphosphate = 5-phospho-alpha-D-ribose 1-diphosphate + uracil</text>
        <dbReference type="Rhea" id="RHEA:13017"/>
        <dbReference type="ChEBI" id="CHEBI:17568"/>
        <dbReference type="ChEBI" id="CHEBI:33019"/>
        <dbReference type="ChEBI" id="CHEBI:57865"/>
        <dbReference type="ChEBI" id="CHEBI:58017"/>
        <dbReference type="EC" id="2.4.2.9"/>
    </reaction>
</comment>
<comment type="subunit">
    <text evidence="1">Homodimer and homohexamer; in equilibrium.</text>
</comment>
<comment type="similarity">
    <text evidence="1">Belongs to the purine/pyrimidine phosphoribosyltransferase family. PyrR subfamily.</text>
</comment>
<evidence type="ECO:0000255" key="1">
    <source>
        <dbReference type="HAMAP-Rule" id="MF_01219"/>
    </source>
</evidence>
<dbReference type="EC" id="2.4.2.9" evidence="1"/>
<dbReference type="EMBL" id="DQ489736">
    <property type="protein sequence ID" value="ACA82942.1"/>
    <property type="molecule type" value="Genomic_DNA"/>
</dbReference>
<dbReference type="RefSeq" id="WP_004900970.1">
    <property type="nucleotide sequence ID" value="NC_010471.1"/>
</dbReference>
<dbReference type="SMR" id="B1MZJ0"/>
<dbReference type="STRING" id="349519.LCK_01115"/>
<dbReference type="GeneID" id="61101865"/>
<dbReference type="KEGG" id="lci:LCK_01115"/>
<dbReference type="eggNOG" id="COG2065">
    <property type="taxonomic scope" value="Bacteria"/>
</dbReference>
<dbReference type="HOGENOM" id="CLU_094234_2_1_9"/>
<dbReference type="OrthoDB" id="9802227at2"/>
<dbReference type="Proteomes" id="UP000002166">
    <property type="component" value="Chromosome"/>
</dbReference>
<dbReference type="GO" id="GO:0003723">
    <property type="term" value="F:RNA binding"/>
    <property type="evidence" value="ECO:0007669"/>
    <property type="project" value="UniProtKB-UniRule"/>
</dbReference>
<dbReference type="GO" id="GO:0004845">
    <property type="term" value="F:uracil phosphoribosyltransferase activity"/>
    <property type="evidence" value="ECO:0007669"/>
    <property type="project" value="UniProtKB-UniRule"/>
</dbReference>
<dbReference type="GO" id="GO:0006353">
    <property type="term" value="P:DNA-templated transcription termination"/>
    <property type="evidence" value="ECO:0007669"/>
    <property type="project" value="UniProtKB-UniRule"/>
</dbReference>
<dbReference type="CDD" id="cd06223">
    <property type="entry name" value="PRTases_typeI"/>
    <property type="match status" value="1"/>
</dbReference>
<dbReference type="FunFam" id="3.40.50.2020:FF:000020">
    <property type="entry name" value="Bifunctional protein PyrR"/>
    <property type="match status" value="1"/>
</dbReference>
<dbReference type="Gene3D" id="3.40.50.2020">
    <property type="match status" value="1"/>
</dbReference>
<dbReference type="HAMAP" id="MF_01219">
    <property type="entry name" value="PyrR"/>
    <property type="match status" value="1"/>
</dbReference>
<dbReference type="InterPro" id="IPR000836">
    <property type="entry name" value="PRibTrfase_dom"/>
</dbReference>
<dbReference type="InterPro" id="IPR029057">
    <property type="entry name" value="PRTase-like"/>
</dbReference>
<dbReference type="InterPro" id="IPR023050">
    <property type="entry name" value="PyrR"/>
</dbReference>
<dbReference type="InterPro" id="IPR050137">
    <property type="entry name" value="PyrR_bifunctional"/>
</dbReference>
<dbReference type="NCBIfam" id="NF003548">
    <property type="entry name" value="PRK05205.1-4"/>
    <property type="match status" value="1"/>
</dbReference>
<dbReference type="NCBIfam" id="NF003549">
    <property type="entry name" value="PRK05205.1-5"/>
    <property type="match status" value="1"/>
</dbReference>
<dbReference type="PANTHER" id="PTHR11608">
    <property type="entry name" value="BIFUNCTIONAL PROTEIN PYRR"/>
    <property type="match status" value="1"/>
</dbReference>
<dbReference type="PANTHER" id="PTHR11608:SF0">
    <property type="entry name" value="BIFUNCTIONAL PROTEIN PYRR"/>
    <property type="match status" value="1"/>
</dbReference>
<dbReference type="Pfam" id="PF00156">
    <property type="entry name" value="Pribosyltran"/>
    <property type="match status" value="1"/>
</dbReference>
<dbReference type="SUPFAM" id="SSF53271">
    <property type="entry name" value="PRTase-like"/>
    <property type="match status" value="1"/>
</dbReference>